<name>ARGB_SALPA</name>
<sequence length="258" mass="27007">MMNPLIIKLGGVLLDSEEALERLFTALVNYRESHQRPLVIVHGGGCVVDELMKGLNLPVKKKDGLRVTPADQIGIITGALAGTANKTLLAWAKKHHIASVGLFLGDGDSVNVTQLDEALGHVGLAQPGSPKLINMLLENGFLPVVSSIGVTDDGQLMNVNADQAATALAATLGADLILLSDVSGILDGKGQRIAEMTASKAEQLIDQGIITDGMIVKVNAALDAARALGRPVDIASWRHAEQLPALFNGTPIGTRILA</sequence>
<comment type="function">
    <text evidence="1">Catalyzes the ATP-dependent phosphorylation of N-acetyl-L-glutamate.</text>
</comment>
<comment type="catalytic activity">
    <reaction evidence="1">
        <text>N-acetyl-L-glutamate + ATP = N-acetyl-L-glutamyl 5-phosphate + ADP</text>
        <dbReference type="Rhea" id="RHEA:14629"/>
        <dbReference type="ChEBI" id="CHEBI:30616"/>
        <dbReference type="ChEBI" id="CHEBI:44337"/>
        <dbReference type="ChEBI" id="CHEBI:57936"/>
        <dbReference type="ChEBI" id="CHEBI:456216"/>
        <dbReference type="EC" id="2.7.2.8"/>
    </reaction>
</comment>
<comment type="pathway">
    <text evidence="1">Amino-acid biosynthesis; L-arginine biosynthesis; N(2)-acetyl-L-ornithine from L-glutamate: step 2/4.</text>
</comment>
<comment type="subunit">
    <text evidence="1">Homodimer.</text>
</comment>
<comment type="subcellular location">
    <subcellularLocation>
        <location evidence="1">Cytoplasm</location>
    </subcellularLocation>
</comment>
<comment type="similarity">
    <text evidence="1">Belongs to the acetylglutamate kinase family. ArgB subfamily.</text>
</comment>
<comment type="sequence caution" evidence="2">
    <conflict type="erroneous initiation">
        <sequence resource="EMBL-CDS" id="AAV79723"/>
    </conflict>
</comment>
<accession>Q5PK74</accession>
<organism>
    <name type="scientific">Salmonella paratyphi A (strain ATCC 9150 / SARB42)</name>
    <dbReference type="NCBI Taxonomy" id="295319"/>
    <lineage>
        <taxon>Bacteria</taxon>
        <taxon>Pseudomonadati</taxon>
        <taxon>Pseudomonadota</taxon>
        <taxon>Gammaproteobacteria</taxon>
        <taxon>Enterobacterales</taxon>
        <taxon>Enterobacteriaceae</taxon>
        <taxon>Salmonella</taxon>
    </lineage>
</organism>
<reference key="1">
    <citation type="journal article" date="2004" name="Nat. Genet.">
        <title>Comparison of genome degradation in Paratyphi A and Typhi, human-restricted serovars of Salmonella enterica that cause typhoid.</title>
        <authorList>
            <person name="McClelland M."/>
            <person name="Sanderson K.E."/>
            <person name="Clifton S.W."/>
            <person name="Latreille P."/>
            <person name="Porwollik S."/>
            <person name="Sabo A."/>
            <person name="Meyer R."/>
            <person name="Bieri T."/>
            <person name="Ozersky P."/>
            <person name="McLellan M."/>
            <person name="Harkins C.R."/>
            <person name="Wang C."/>
            <person name="Nguyen C."/>
            <person name="Berghoff A."/>
            <person name="Elliott G."/>
            <person name="Kohlberg S."/>
            <person name="Strong C."/>
            <person name="Du F."/>
            <person name="Carter J."/>
            <person name="Kremizki C."/>
            <person name="Layman D."/>
            <person name="Leonard S."/>
            <person name="Sun H."/>
            <person name="Fulton L."/>
            <person name="Nash W."/>
            <person name="Miner T."/>
            <person name="Minx P."/>
            <person name="Delehaunty K."/>
            <person name="Fronick C."/>
            <person name="Magrini V."/>
            <person name="Nhan M."/>
            <person name="Warren W."/>
            <person name="Florea L."/>
            <person name="Spieth J."/>
            <person name="Wilson R.K."/>
        </authorList>
    </citation>
    <scope>NUCLEOTIDE SEQUENCE [LARGE SCALE GENOMIC DNA]</scope>
    <source>
        <strain>ATCC 9150 / SARB42</strain>
    </source>
</reference>
<feature type="chain" id="PRO_0000264755" description="Acetylglutamate kinase">
    <location>
        <begin position="1"/>
        <end position="258"/>
    </location>
</feature>
<feature type="binding site" evidence="1">
    <location>
        <begin position="44"/>
        <end position="45"/>
    </location>
    <ligand>
        <name>substrate</name>
    </ligand>
</feature>
<feature type="binding site" evidence="1">
    <location>
        <position position="66"/>
    </location>
    <ligand>
        <name>substrate</name>
    </ligand>
</feature>
<feature type="binding site" evidence="1">
    <location>
        <position position="158"/>
    </location>
    <ligand>
        <name>substrate</name>
    </ligand>
</feature>
<feature type="binding site" evidence="1">
    <location>
        <begin position="181"/>
        <end position="186"/>
    </location>
    <ligand>
        <name>ATP</name>
        <dbReference type="ChEBI" id="CHEBI:30616"/>
    </ligand>
</feature>
<feature type="binding site" evidence="1">
    <location>
        <begin position="209"/>
        <end position="211"/>
    </location>
    <ligand>
        <name>ATP</name>
        <dbReference type="ChEBI" id="CHEBI:30616"/>
    </ligand>
</feature>
<feature type="site" description="Transition state stabilizer" evidence="1">
    <location>
        <position position="8"/>
    </location>
</feature>
<feature type="site" description="Transition state stabilizer" evidence="1">
    <location>
        <position position="217"/>
    </location>
</feature>
<evidence type="ECO:0000255" key="1">
    <source>
        <dbReference type="HAMAP-Rule" id="MF_00082"/>
    </source>
</evidence>
<evidence type="ECO:0000305" key="2"/>
<dbReference type="EC" id="2.7.2.8" evidence="1"/>
<dbReference type="EMBL" id="CP000026">
    <property type="protein sequence ID" value="AAV79723.1"/>
    <property type="status" value="ALT_INIT"/>
    <property type="molecule type" value="Genomic_DNA"/>
</dbReference>
<dbReference type="RefSeq" id="WP_001575262.1">
    <property type="nucleotide sequence ID" value="NC_006511.1"/>
</dbReference>
<dbReference type="SMR" id="Q5PK74"/>
<dbReference type="KEGG" id="spt:SPA3960"/>
<dbReference type="HOGENOM" id="CLU_053680_1_1_6"/>
<dbReference type="UniPathway" id="UPA00068">
    <property type="reaction ID" value="UER00107"/>
</dbReference>
<dbReference type="Proteomes" id="UP000008185">
    <property type="component" value="Chromosome"/>
</dbReference>
<dbReference type="GO" id="GO:0005737">
    <property type="term" value="C:cytoplasm"/>
    <property type="evidence" value="ECO:0007669"/>
    <property type="project" value="UniProtKB-SubCell"/>
</dbReference>
<dbReference type="GO" id="GO:0003991">
    <property type="term" value="F:acetylglutamate kinase activity"/>
    <property type="evidence" value="ECO:0007669"/>
    <property type="project" value="UniProtKB-UniRule"/>
</dbReference>
<dbReference type="GO" id="GO:0005524">
    <property type="term" value="F:ATP binding"/>
    <property type="evidence" value="ECO:0007669"/>
    <property type="project" value="UniProtKB-UniRule"/>
</dbReference>
<dbReference type="GO" id="GO:0042450">
    <property type="term" value="P:arginine biosynthetic process via ornithine"/>
    <property type="evidence" value="ECO:0007669"/>
    <property type="project" value="UniProtKB-UniRule"/>
</dbReference>
<dbReference type="GO" id="GO:0006526">
    <property type="term" value="P:L-arginine biosynthetic process"/>
    <property type="evidence" value="ECO:0007669"/>
    <property type="project" value="UniProtKB-UniPathway"/>
</dbReference>
<dbReference type="CDD" id="cd04249">
    <property type="entry name" value="AAK_NAGK-NC"/>
    <property type="match status" value="1"/>
</dbReference>
<dbReference type="FunFam" id="3.40.1160.10:FF:000008">
    <property type="entry name" value="Acetylglutamate kinase"/>
    <property type="match status" value="1"/>
</dbReference>
<dbReference type="Gene3D" id="3.40.1160.10">
    <property type="entry name" value="Acetylglutamate kinase-like"/>
    <property type="match status" value="1"/>
</dbReference>
<dbReference type="HAMAP" id="MF_00082">
    <property type="entry name" value="ArgB"/>
    <property type="match status" value="1"/>
</dbReference>
<dbReference type="InterPro" id="IPR036393">
    <property type="entry name" value="AceGlu_kinase-like_sf"/>
</dbReference>
<dbReference type="InterPro" id="IPR004662">
    <property type="entry name" value="AcgluKinase_fam"/>
</dbReference>
<dbReference type="InterPro" id="IPR037528">
    <property type="entry name" value="ArgB"/>
</dbReference>
<dbReference type="InterPro" id="IPR001048">
    <property type="entry name" value="Asp/Glu/Uridylate_kinase"/>
</dbReference>
<dbReference type="InterPro" id="IPR041731">
    <property type="entry name" value="NAGK-NC"/>
</dbReference>
<dbReference type="NCBIfam" id="TIGR00761">
    <property type="entry name" value="argB"/>
    <property type="match status" value="1"/>
</dbReference>
<dbReference type="PANTHER" id="PTHR23342">
    <property type="entry name" value="N-ACETYLGLUTAMATE SYNTHASE"/>
    <property type="match status" value="1"/>
</dbReference>
<dbReference type="PANTHER" id="PTHR23342:SF0">
    <property type="entry name" value="N-ACETYLGLUTAMATE SYNTHASE, MITOCHONDRIAL"/>
    <property type="match status" value="1"/>
</dbReference>
<dbReference type="Pfam" id="PF00696">
    <property type="entry name" value="AA_kinase"/>
    <property type="match status" value="1"/>
</dbReference>
<dbReference type="PIRSF" id="PIRSF000728">
    <property type="entry name" value="NAGK"/>
    <property type="match status" value="1"/>
</dbReference>
<dbReference type="SUPFAM" id="SSF53633">
    <property type="entry name" value="Carbamate kinase-like"/>
    <property type="match status" value="1"/>
</dbReference>
<keyword id="KW-0028">Amino-acid biosynthesis</keyword>
<keyword id="KW-0055">Arginine biosynthesis</keyword>
<keyword id="KW-0067">ATP-binding</keyword>
<keyword id="KW-0963">Cytoplasm</keyword>
<keyword id="KW-0418">Kinase</keyword>
<keyword id="KW-0547">Nucleotide-binding</keyword>
<keyword id="KW-0808">Transferase</keyword>
<proteinExistence type="inferred from homology"/>
<protein>
    <recommendedName>
        <fullName evidence="1">Acetylglutamate kinase</fullName>
        <ecNumber evidence="1">2.7.2.8</ecNumber>
    </recommendedName>
    <alternativeName>
        <fullName evidence="1">N-acetyl-L-glutamate 5-phosphotransferase</fullName>
    </alternativeName>
    <alternativeName>
        <fullName evidence="1">NAG kinase</fullName>
        <shortName evidence="1">NAGK</shortName>
    </alternativeName>
</protein>
<gene>
    <name evidence="1" type="primary">argB</name>
    <name type="ordered locus">SPA3960</name>
</gene>